<feature type="chain" id="PRO_0000321584" description="UPF0060 membrane protein Mpe_A1656">
    <location>
        <begin position="1"/>
        <end position="112"/>
    </location>
</feature>
<feature type="transmembrane region" description="Helical" evidence="1">
    <location>
        <begin position="9"/>
        <end position="29"/>
    </location>
</feature>
<feature type="transmembrane region" description="Helical" evidence="1">
    <location>
        <begin position="34"/>
        <end position="54"/>
    </location>
</feature>
<feature type="transmembrane region" description="Helical" evidence="1">
    <location>
        <begin position="65"/>
        <end position="85"/>
    </location>
</feature>
<feature type="transmembrane region" description="Helical" evidence="1">
    <location>
        <begin position="91"/>
        <end position="111"/>
    </location>
</feature>
<comment type="subcellular location">
    <subcellularLocation>
        <location evidence="1">Cell inner membrane</location>
        <topology evidence="1">Multi-pass membrane protein</topology>
    </subcellularLocation>
</comment>
<comment type="similarity">
    <text evidence="1">Belongs to the UPF0060 family.</text>
</comment>
<comment type="sequence caution" evidence="2">
    <conflict type="erroneous initiation">
        <sequence resource="EMBL-CDS" id="ABM94618"/>
    </conflict>
</comment>
<proteinExistence type="inferred from homology"/>
<organism>
    <name type="scientific">Methylibium petroleiphilum (strain ATCC BAA-1232 / LMG 22953 / PM1)</name>
    <dbReference type="NCBI Taxonomy" id="420662"/>
    <lineage>
        <taxon>Bacteria</taxon>
        <taxon>Pseudomonadati</taxon>
        <taxon>Pseudomonadota</taxon>
        <taxon>Betaproteobacteria</taxon>
        <taxon>Burkholderiales</taxon>
        <taxon>Sphaerotilaceae</taxon>
        <taxon>Methylibium</taxon>
    </lineage>
</organism>
<reference key="1">
    <citation type="journal article" date="2007" name="J. Bacteriol.">
        <title>Whole-genome analysis of the methyl tert-butyl ether-degrading beta-proteobacterium Methylibium petroleiphilum PM1.</title>
        <authorList>
            <person name="Kane S.R."/>
            <person name="Chakicherla A.Y."/>
            <person name="Chain P.S.G."/>
            <person name="Schmidt R."/>
            <person name="Shin M.W."/>
            <person name="Legler T.C."/>
            <person name="Scow K.M."/>
            <person name="Larimer F.W."/>
            <person name="Lucas S.M."/>
            <person name="Richardson P.M."/>
            <person name="Hristova K.R."/>
        </authorList>
    </citation>
    <scope>NUCLEOTIDE SEQUENCE [LARGE SCALE GENOMIC DNA]</scope>
    <source>
        <strain>ATCC BAA-1232 / LMG 22953 / PM1</strain>
    </source>
</reference>
<sequence length="112" mass="11988">MLDFLRVTGLFFVTAVAEIVGCYLPWLVLTQGRSAWLLVPAAASLAVFAWLLTLHPSAAGRTYAAYGGVYVVVALLWLWRVDGVVPTRWDLVGGAICLAGMAIIALQPRAAS</sequence>
<gene>
    <name type="ordered locus">Mpe_A1656</name>
</gene>
<keyword id="KW-0997">Cell inner membrane</keyword>
<keyword id="KW-1003">Cell membrane</keyword>
<keyword id="KW-0472">Membrane</keyword>
<keyword id="KW-1185">Reference proteome</keyword>
<keyword id="KW-0812">Transmembrane</keyword>
<keyword id="KW-1133">Transmembrane helix</keyword>
<name>Y1656_METPP</name>
<accession>A2SGC9</accession>
<dbReference type="EMBL" id="CP000555">
    <property type="protein sequence ID" value="ABM94618.1"/>
    <property type="status" value="ALT_INIT"/>
    <property type="molecule type" value="Genomic_DNA"/>
</dbReference>
<dbReference type="RefSeq" id="WP_041929599.1">
    <property type="nucleotide sequence ID" value="NC_008825.1"/>
</dbReference>
<dbReference type="SMR" id="A2SGC9"/>
<dbReference type="STRING" id="420662.Mpe_A1656"/>
<dbReference type="KEGG" id="mpt:Mpe_A1656"/>
<dbReference type="eggNOG" id="COG1742">
    <property type="taxonomic scope" value="Bacteria"/>
</dbReference>
<dbReference type="HOGENOM" id="CLU_117653_2_0_4"/>
<dbReference type="Proteomes" id="UP000000366">
    <property type="component" value="Chromosome"/>
</dbReference>
<dbReference type="GO" id="GO:0005886">
    <property type="term" value="C:plasma membrane"/>
    <property type="evidence" value="ECO:0007669"/>
    <property type="project" value="UniProtKB-SubCell"/>
</dbReference>
<dbReference type="HAMAP" id="MF_00010">
    <property type="entry name" value="UPF0060"/>
    <property type="match status" value="1"/>
</dbReference>
<dbReference type="InterPro" id="IPR003844">
    <property type="entry name" value="UPF0060"/>
</dbReference>
<dbReference type="NCBIfam" id="NF002586">
    <property type="entry name" value="PRK02237.1"/>
    <property type="match status" value="1"/>
</dbReference>
<dbReference type="PANTHER" id="PTHR36116">
    <property type="entry name" value="UPF0060 MEMBRANE PROTEIN YNFA"/>
    <property type="match status" value="1"/>
</dbReference>
<dbReference type="PANTHER" id="PTHR36116:SF1">
    <property type="entry name" value="UPF0060 MEMBRANE PROTEIN YNFA"/>
    <property type="match status" value="1"/>
</dbReference>
<dbReference type="Pfam" id="PF02694">
    <property type="entry name" value="UPF0060"/>
    <property type="match status" value="1"/>
</dbReference>
<dbReference type="SUPFAM" id="SSF103481">
    <property type="entry name" value="Multidrug resistance efflux transporter EmrE"/>
    <property type="match status" value="1"/>
</dbReference>
<protein>
    <recommendedName>
        <fullName evidence="1">UPF0060 membrane protein Mpe_A1656</fullName>
    </recommendedName>
</protein>
<evidence type="ECO:0000255" key="1">
    <source>
        <dbReference type="HAMAP-Rule" id="MF_00010"/>
    </source>
</evidence>
<evidence type="ECO:0000305" key="2"/>